<feature type="chain" id="PRO_0000334573" description="Callose synthase 1">
    <location>
        <begin position="1"/>
        <end position="1950"/>
    </location>
</feature>
<feature type="topological domain" description="Cytoplasmic" evidence="1">
    <location>
        <begin position="1"/>
        <end position="481"/>
    </location>
</feature>
<feature type="transmembrane region" description="Helical" evidence="1">
    <location>
        <begin position="482"/>
        <end position="502"/>
    </location>
</feature>
<feature type="topological domain" description="Extracellular" evidence="1">
    <location>
        <begin position="503"/>
        <end position="505"/>
    </location>
</feature>
<feature type="transmembrane region" description="Helical" evidence="1">
    <location>
        <begin position="506"/>
        <end position="526"/>
    </location>
</feature>
<feature type="topological domain" description="Cytoplasmic" evidence="1">
    <location>
        <begin position="527"/>
        <end position="552"/>
    </location>
</feature>
<feature type="transmembrane region" description="Helical" evidence="1">
    <location>
        <begin position="553"/>
        <end position="573"/>
    </location>
</feature>
<feature type="topological domain" description="Extracellular" evidence="1">
    <location>
        <begin position="574"/>
        <end position="599"/>
    </location>
</feature>
<feature type="transmembrane region" description="Helical" evidence="1">
    <location>
        <begin position="600"/>
        <end position="620"/>
    </location>
</feature>
<feature type="topological domain" description="Cytoplasmic" evidence="1">
    <location>
        <begin position="621"/>
        <end position="655"/>
    </location>
</feature>
<feature type="transmembrane region" description="Helical" evidence="1">
    <location>
        <begin position="656"/>
        <end position="676"/>
    </location>
</feature>
<feature type="topological domain" description="Extracellular" evidence="1">
    <location>
        <begin position="677"/>
        <end position="712"/>
    </location>
</feature>
<feature type="transmembrane region" description="Helical" evidence="1">
    <location>
        <begin position="713"/>
        <end position="733"/>
    </location>
</feature>
<feature type="topological domain" description="Cytoplasmic" evidence="1">
    <location>
        <begin position="734"/>
        <end position="1511"/>
    </location>
</feature>
<feature type="transmembrane region" description="Helical" evidence="1">
    <location>
        <begin position="1512"/>
        <end position="1532"/>
    </location>
</feature>
<feature type="topological domain" description="Extracellular" evidence="1">
    <location>
        <begin position="1533"/>
        <end position="1560"/>
    </location>
</feature>
<feature type="transmembrane region" description="Helical" evidence="1">
    <location>
        <begin position="1561"/>
        <end position="1581"/>
    </location>
</feature>
<feature type="topological domain" description="Cytoplasmic" evidence="1">
    <location>
        <begin position="1582"/>
        <end position="1591"/>
    </location>
</feature>
<feature type="transmembrane region" description="Helical" evidence="1">
    <location>
        <begin position="1592"/>
        <end position="1612"/>
    </location>
</feature>
<feature type="topological domain" description="Extracellular" evidence="1">
    <location>
        <begin position="1613"/>
        <end position="1655"/>
    </location>
</feature>
<feature type="transmembrane region" description="Helical" evidence="1">
    <location>
        <begin position="1656"/>
        <end position="1676"/>
    </location>
</feature>
<feature type="topological domain" description="Cytoplasmic" evidence="1">
    <location>
        <begin position="1677"/>
        <end position="1682"/>
    </location>
</feature>
<feature type="transmembrane region" description="Helical" evidence="1">
    <location>
        <begin position="1683"/>
        <end position="1703"/>
    </location>
</feature>
<feature type="topological domain" description="Extracellular" evidence="1">
    <location>
        <begin position="1704"/>
        <end position="1755"/>
    </location>
</feature>
<feature type="transmembrane region" description="Helical" evidence="1">
    <location>
        <begin position="1756"/>
        <end position="1776"/>
    </location>
</feature>
<feature type="topological domain" description="Cytoplasmic" evidence="1">
    <location>
        <begin position="1777"/>
        <end position="1787"/>
    </location>
</feature>
<feature type="transmembrane region" description="Helical" evidence="1">
    <location>
        <begin position="1788"/>
        <end position="1808"/>
    </location>
</feature>
<feature type="topological domain" description="Extracellular" evidence="1">
    <location>
        <begin position="1809"/>
        <end position="1828"/>
    </location>
</feature>
<feature type="transmembrane region" description="Helical" evidence="1">
    <location>
        <begin position="1829"/>
        <end position="1849"/>
    </location>
</feature>
<feature type="topological domain" description="Cytoplasmic" evidence="1">
    <location>
        <begin position="1850"/>
        <end position="1851"/>
    </location>
</feature>
<feature type="transmembrane region" description="Helical" evidence="1">
    <location>
        <begin position="1852"/>
        <end position="1872"/>
    </location>
</feature>
<feature type="topological domain" description="Extracellular" evidence="1">
    <location>
        <begin position="1873"/>
        <end position="1894"/>
    </location>
</feature>
<feature type="transmembrane region" description="Helical" evidence="1">
    <location>
        <begin position="1895"/>
        <end position="1915"/>
    </location>
</feature>
<feature type="topological domain" description="Cytoplasmic" evidence="1">
    <location>
        <begin position="1916"/>
        <end position="1950"/>
    </location>
</feature>
<feature type="glycosylation site" description="N-linked (GlcNAc...) asparagine" evidence="1">
    <location>
        <position position="577"/>
    </location>
</feature>
<feature type="sequence conflict" description="In Ref. 1; AAK37413." evidence="6" ref="1">
    <original>T</original>
    <variation>A</variation>
    <location>
        <position position="88"/>
    </location>
</feature>
<feature type="sequence conflict" description="In Ref. 1; AAK37413." evidence="6" ref="1">
    <original>Q</original>
    <variation>R</variation>
    <location>
        <position position="126"/>
    </location>
</feature>
<feature type="sequence conflict" description="In Ref. 1; AAK37413." evidence="6" ref="1">
    <original>A</original>
    <variation>S</variation>
    <location>
        <position position="560"/>
    </location>
</feature>
<feature type="sequence conflict" description="In Ref. 1; AAK37413." evidence="6" ref="1">
    <original>L</original>
    <variation>P</variation>
    <location>
        <position position="725"/>
    </location>
</feature>
<feature type="sequence conflict" description="In Ref. 1; AAK37413." evidence="6" ref="1">
    <original>KGT</original>
    <variation>EGA</variation>
    <location>
        <begin position="1268"/>
        <end position="1270"/>
    </location>
</feature>
<feature type="sequence conflict" description="In Ref. 4; BAF00852." evidence="6" ref="4">
    <original>V</original>
    <variation>A</variation>
    <location>
        <position position="1396"/>
    </location>
</feature>
<feature type="sequence conflict" description="In Ref. 4; BAF00852." evidence="6" ref="4">
    <original>R</original>
    <variation>H</variation>
    <location>
        <position position="1653"/>
    </location>
</feature>
<dbReference type="EC" id="2.4.1.34"/>
<dbReference type="EMBL" id="AF237733">
    <property type="protein sequence ID" value="AAK37413.1"/>
    <property type="molecule type" value="mRNA"/>
</dbReference>
<dbReference type="EMBL" id="AC005106">
    <property type="protein sequence ID" value="AAF79729.1"/>
    <property type="status" value="ALT_SEQ"/>
    <property type="molecule type" value="Genomic_DNA"/>
</dbReference>
<dbReference type="EMBL" id="AC007153">
    <property type="protein sequence ID" value="AAD30609.1"/>
    <property type="status" value="ALT_SEQ"/>
    <property type="molecule type" value="Genomic_DNA"/>
</dbReference>
<dbReference type="EMBL" id="CP002684">
    <property type="protein sequence ID" value="AEE27855.1"/>
    <property type="molecule type" value="Genomic_DNA"/>
</dbReference>
<dbReference type="EMBL" id="CP002684">
    <property type="protein sequence ID" value="ANM60178.1"/>
    <property type="molecule type" value="Genomic_DNA"/>
</dbReference>
<dbReference type="EMBL" id="CP002684">
    <property type="protein sequence ID" value="ANM60179.1"/>
    <property type="molecule type" value="Genomic_DNA"/>
</dbReference>
<dbReference type="EMBL" id="AK228963">
    <property type="protein sequence ID" value="BAF00852.1"/>
    <property type="molecule type" value="mRNA"/>
</dbReference>
<dbReference type="PIR" id="E86189">
    <property type="entry name" value="E86189"/>
</dbReference>
<dbReference type="RefSeq" id="NP_001322482.1">
    <molecule id="Q9AUE0-1"/>
    <property type="nucleotide sequence ID" value="NM_001331555.1"/>
</dbReference>
<dbReference type="RefSeq" id="NP_001322483.1">
    <molecule id="Q9AUE0-1"/>
    <property type="nucleotide sequence ID" value="NM_001331556.1"/>
</dbReference>
<dbReference type="RefSeq" id="NP_563743.2">
    <molecule id="Q9AUE0-1"/>
    <property type="nucleotide sequence ID" value="NM_100436.5"/>
</dbReference>
<dbReference type="SMR" id="Q9AUE0"/>
<dbReference type="BioGRID" id="22301">
    <property type="interactions" value="1"/>
</dbReference>
<dbReference type="FunCoup" id="Q9AUE0">
    <property type="interactions" value="660"/>
</dbReference>
<dbReference type="IntAct" id="Q9AUE0">
    <property type="interactions" value="2"/>
</dbReference>
<dbReference type="STRING" id="3702.Q9AUE0"/>
<dbReference type="CAZy" id="GT48">
    <property type="family name" value="Glycosyltransferase Family 48"/>
</dbReference>
<dbReference type="GlyCosmos" id="Q9AUE0">
    <property type="glycosylation" value="1 site, No reported glycans"/>
</dbReference>
<dbReference type="GlyGen" id="Q9AUE0">
    <property type="glycosylation" value="2 sites"/>
</dbReference>
<dbReference type="iPTMnet" id="Q9AUE0"/>
<dbReference type="PaxDb" id="3702-AT1G05570.1"/>
<dbReference type="ProteomicsDB" id="239091">
    <molecule id="Q9AUE0-1"/>
</dbReference>
<dbReference type="EnsemblPlants" id="AT1G05570.1">
    <molecule id="Q9AUE0-1"/>
    <property type="protein sequence ID" value="AT1G05570.1"/>
    <property type="gene ID" value="AT1G05570"/>
</dbReference>
<dbReference type="EnsemblPlants" id="AT1G05570.3">
    <molecule id="Q9AUE0-1"/>
    <property type="protein sequence ID" value="AT1G05570.3"/>
    <property type="gene ID" value="AT1G05570"/>
</dbReference>
<dbReference type="EnsemblPlants" id="AT1G05570.4">
    <molecule id="Q9AUE0-1"/>
    <property type="protein sequence ID" value="AT1G05570.4"/>
    <property type="gene ID" value="AT1G05570"/>
</dbReference>
<dbReference type="GeneID" id="837059"/>
<dbReference type="Gramene" id="AT1G05570.1">
    <molecule id="Q9AUE0-1"/>
    <property type="protein sequence ID" value="AT1G05570.1"/>
    <property type="gene ID" value="AT1G05570"/>
</dbReference>
<dbReference type="Gramene" id="AT1G05570.3">
    <molecule id="Q9AUE0-1"/>
    <property type="protein sequence ID" value="AT1G05570.3"/>
    <property type="gene ID" value="AT1G05570"/>
</dbReference>
<dbReference type="Gramene" id="AT1G05570.4">
    <molecule id="Q9AUE0-1"/>
    <property type="protein sequence ID" value="AT1G05570.4"/>
    <property type="gene ID" value="AT1G05570"/>
</dbReference>
<dbReference type="KEGG" id="ath:AT1G05570"/>
<dbReference type="Araport" id="AT1G05570"/>
<dbReference type="TAIR" id="AT1G05570">
    <property type="gene designation" value="CALS1"/>
</dbReference>
<dbReference type="eggNOG" id="KOG0916">
    <property type="taxonomic scope" value="Eukaryota"/>
</dbReference>
<dbReference type="InParanoid" id="Q9AUE0"/>
<dbReference type="PhylomeDB" id="Q9AUE0"/>
<dbReference type="BioCyc" id="ARA:AT1G05570-MONOMER"/>
<dbReference type="PRO" id="PR:Q9AUE0"/>
<dbReference type="Proteomes" id="UP000006548">
    <property type="component" value="Chromosome 1"/>
</dbReference>
<dbReference type="ExpressionAtlas" id="Q9AUE0">
    <property type="expression patterns" value="baseline and differential"/>
</dbReference>
<dbReference type="GO" id="GO:0000148">
    <property type="term" value="C:1,3-beta-D-glucan synthase complex"/>
    <property type="evidence" value="ECO:0007669"/>
    <property type="project" value="InterPro"/>
</dbReference>
<dbReference type="GO" id="GO:0009504">
    <property type="term" value="C:cell plate"/>
    <property type="evidence" value="ECO:0000314"/>
    <property type="project" value="TAIR"/>
</dbReference>
<dbReference type="GO" id="GO:0005886">
    <property type="term" value="C:plasma membrane"/>
    <property type="evidence" value="ECO:0007669"/>
    <property type="project" value="UniProtKB-SubCell"/>
</dbReference>
<dbReference type="GO" id="GO:0009506">
    <property type="term" value="C:plasmodesma"/>
    <property type="evidence" value="ECO:0007005"/>
    <property type="project" value="TAIR"/>
</dbReference>
<dbReference type="GO" id="GO:0003843">
    <property type="term" value="F:1,3-beta-D-glucan synthase activity"/>
    <property type="evidence" value="ECO:0007669"/>
    <property type="project" value="UniProtKB-EC"/>
</dbReference>
<dbReference type="GO" id="GO:0006075">
    <property type="term" value="P:(1-&gt;3)-beta-D-glucan biosynthetic process"/>
    <property type="evidence" value="ECO:0007669"/>
    <property type="project" value="InterPro"/>
</dbReference>
<dbReference type="GO" id="GO:0071555">
    <property type="term" value="P:cell wall organization"/>
    <property type="evidence" value="ECO:0007669"/>
    <property type="project" value="UniProtKB-KW"/>
</dbReference>
<dbReference type="GO" id="GO:0008360">
    <property type="term" value="P:regulation of cell shape"/>
    <property type="evidence" value="ECO:0007669"/>
    <property type="project" value="UniProtKB-KW"/>
</dbReference>
<dbReference type="FunFam" id="1.25.40.270:FF:000002">
    <property type="entry name" value="callose synthase 3"/>
    <property type="match status" value="1"/>
</dbReference>
<dbReference type="Gene3D" id="1.25.40.270">
    <property type="entry name" value="Vacuolar protein sorting-associated protein vta1"/>
    <property type="match status" value="1"/>
</dbReference>
<dbReference type="InterPro" id="IPR026899">
    <property type="entry name" value="FKS1-like_dom1"/>
</dbReference>
<dbReference type="InterPro" id="IPR003440">
    <property type="entry name" value="Glyco_trans_48_dom"/>
</dbReference>
<dbReference type="InterPro" id="IPR039431">
    <property type="entry name" value="Vta1/CALS_N"/>
</dbReference>
<dbReference type="InterPro" id="IPR023175">
    <property type="entry name" value="Vta1/CALS_N_sf"/>
</dbReference>
<dbReference type="PANTHER" id="PTHR12741:SF59">
    <property type="entry name" value="CALLOSE SYNTHASE 1"/>
    <property type="match status" value="1"/>
</dbReference>
<dbReference type="PANTHER" id="PTHR12741">
    <property type="entry name" value="LYST-INTERACTING PROTEIN LIP5 DOPAMINE RESPONSIVE PROTEIN DRG-1"/>
    <property type="match status" value="1"/>
</dbReference>
<dbReference type="Pfam" id="PF14288">
    <property type="entry name" value="FKS1_dom1"/>
    <property type="match status" value="1"/>
</dbReference>
<dbReference type="Pfam" id="PF02364">
    <property type="entry name" value="Glucan_synthase"/>
    <property type="match status" value="2"/>
</dbReference>
<dbReference type="Pfam" id="PF04652">
    <property type="entry name" value="Vta1"/>
    <property type="match status" value="1"/>
</dbReference>
<dbReference type="SMART" id="SM01205">
    <property type="entry name" value="FKS1_dom1"/>
    <property type="match status" value="1"/>
</dbReference>
<keyword id="KW-0025">Alternative splicing</keyword>
<keyword id="KW-1003">Cell membrane</keyword>
<keyword id="KW-0133">Cell shape</keyword>
<keyword id="KW-0961">Cell wall biogenesis/degradation</keyword>
<keyword id="KW-0325">Glycoprotein</keyword>
<keyword id="KW-0328">Glycosyltransferase</keyword>
<keyword id="KW-0472">Membrane</keyword>
<keyword id="KW-1185">Reference proteome</keyword>
<keyword id="KW-0808">Transferase</keyword>
<keyword id="KW-0812">Transmembrane</keyword>
<keyword id="KW-1133">Transmembrane helix</keyword>
<name>CALS1_ARATH</name>
<organism>
    <name type="scientific">Arabidopsis thaliana</name>
    <name type="common">Mouse-ear cress</name>
    <dbReference type="NCBI Taxonomy" id="3702"/>
    <lineage>
        <taxon>Eukaryota</taxon>
        <taxon>Viridiplantae</taxon>
        <taxon>Streptophyta</taxon>
        <taxon>Embryophyta</taxon>
        <taxon>Tracheophyta</taxon>
        <taxon>Spermatophyta</taxon>
        <taxon>Magnoliopsida</taxon>
        <taxon>eudicotyledons</taxon>
        <taxon>Gunneridae</taxon>
        <taxon>Pentapetalae</taxon>
        <taxon>rosids</taxon>
        <taxon>malvids</taxon>
        <taxon>Brassicales</taxon>
        <taxon>Brassicaceae</taxon>
        <taxon>Camelineae</taxon>
        <taxon>Arabidopsis</taxon>
    </lineage>
</organism>
<comment type="function">
    <text evidence="5">Involved in callose synthesis at the forming cell plate during cytokinesis. Not required for callose formation after wounding or pathogen attack. During plant growth and development, callose is found as a transitory component of the cell plate in dividing cells, is a major component of pollen mother cell walls and pollen tubes, and is found as a structural component of plasmodesmatal canals.</text>
</comment>
<comment type="catalytic activity">
    <reaction>
        <text>[(1-&gt;3)-beta-D-glucosyl](n) + UDP-alpha-D-glucose = [(1-&gt;3)-beta-D-glucosyl](n+1) + UDP + H(+)</text>
        <dbReference type="Rhea" id="RHEA:21476"/>
        <dbReference type="Rhea" id="RHEA-COMP:11146"/>
        <dbReference type="Rhea" id="RHEA-COMP:14303"/>
        <dbReference type="ChEBI" id="CHEBI:15378"/>
        <dbReference type="ChEBI" id="CHEBI:37671"/>
        <dbReference type="ChEBI" id="CHEBI:58223"/>
        <dbReference type="ChEBI" id="CHEBI:58885"/>
        <dbReference type="EC" id="2.4.1.34"/>
    </reaction>
</comment>
<comment type="activity regulation">
    <text>May be regulated by ROP1 through the interaction with UGT1.</text>
</comment>
<comment type="subunit">
    <text evidence="2 3">Interacts with UGT1 and phragmoplastin. May form a functional complex with UGT1, ROP1 and phragmoplastin.</text>
</comment>
<comment type="subcellular location">
    <subcellularLocation>
        <location evidence="2 4">Cell membrane</location>
        <topology evidence="2 4">Multi-pass membrane protein</topology>
    </subcellularLocation>
    <text>Localized in the forming cell plate during cytokinesis.</text>
</comment>
<comment type="alternative products">
    <event type="alternative splicing"/>
    <isoform>
        <id>Q9AUE0-1</id>
        <name>1</name>
        <sequence type="displayed"/>
    </isoform>
    <text>A number of isoforms are produced. According to EST sequences.</text>
</comment>
<comment type="similarity">
    <text evidence="6">Belongs to the glycosyltransferase 48 family.</text>
</comment>
<comment type="sequence caution" evidence="6">
    <conflict type="erroneous gene model prediction">
        <sequence resource="EMBL-CDS" id="AAD30609"/>
    </conflict>
</comment>
<comment type="sequence caution" evidence="6">
    <conflict type="erroneous gene model prediction">
        <sequence resource="EMBL-CDS" id="AAF79729"/>
    </conflict>
</comment>
<gene>
    <name type="primary">CALS1</name>
    <name type="synonym">GSL6</name>
    <name type="ordered locus">At1g05570</name>
    <name type="ORF">F3F20.1</name>
    <name type="ORF">T25N20.22</name>
</gene>
<reference key="1">
    <citation type="journal article" date="2001" name="Plant Cell">
        <title>A cell plate-specific callose synthase and its interaction with phragmoplastin.</title>
        <authorList>
            <person name="Hong Z."/>
            <person name="Delauney A.J."/>
            <person name="Verma D.P.S."/>
        </authorList>
    </citation>
    <scope>NUCLEOTIDE SEQUENCE [MRNA]</scope>
    <scope>SUBCELLULAR LOCATION</scope>
    <scope>GENE FAMILY</scope>
    <scope>NOMENCLATURE</scope>
    <scope>INTERACTION WITH UGT1 AND PHRAGMOPLASTIN</scope>
    <source>
        <strain>cv. Columbia</strain>
        <tissue>Shoot meristem</tissue>
    </source>
</reference>
<reference key="2">
    <citation type="journal article" date="2000" name="Nature">
        <title>Sequence and analysis of chromosome 1 of the plant Arabidopsis thaliana.</title>
        <authorList>
            <person name="Theologis A."/>
            <person name="Ecker J.R."/>
            <person name="Palm C.J."/>
            <person name="Federspiel N.A."/>
            <person name="Kaul S."/>
            <person name="White O."/>
            <person name="Alonso J."/>
            <person name="Altafi H."/>
            <person name="Araujo R."/>
            <person name="Bowman C.L."/>
            <person name="Brooks S.Y."/>
            <person name="Buehler E."/>
            <person name="Chan A."/>
            <person name="Chao Q."/>
            <person name="Chen H."/>
            <person name="Cheuk R.F."/>
            <person name="Chin C.W."/>
            <person name="Chung M.K."/>
            <person name="Conn L."/>
            <person name="Conway A.B."/>
            <person name="Conway A.R."/>
            <person name="Creasy T.H."/>
            <person name="Dewar K."/>
            <person name="Dunn P."/>
            <person name="Etgu P."/>
            <person name="Feldblyum T.V."/>
            <person name="Feng J.-D."/>
            <person name="Fong B."/>
            <person name="Fujii C.Y."/>
            <person name="Gill J.E."/>
            <person name="Goldsmith A.D."/>
            <person name="Haas B."/>
            <person name="Hansen N.F."/>
            <person name="Hughes B."/>
            <person name="Huizar L."/>
            <person name="Hunter J.L."/>
            <person name="Jenkins J."/>
            <person name="Johnson-Hopson C."/>
            <person name="Khan S."/>
            <person name="Khaykin E."/>
            <person name="Kim C.J."/>
            <person name="Koo H.L."/>
            <person name="Kremenetskaia I."/>
            <person name="Kurtz D.B."/>
            <person name="Kwan A."/>
            <person name="Lam B."/>
            <person name="Langin-Hooper S."/>
            <person name="Lee A."/>
            <person name="Lee J.M."/>
            <person name="Lenz C.A."/>
            <person name="Li J.H."/>
            <person name="Li Y.-P."/>
            <person name="Lin X."/>
            <person name="Liu S.X."/>
            <person name="Liu Z.A."/>
            <person name="Luros J.S."/>
            <person name="Maiti R."/>
            <person name="Marziali A."/>
            <person name="Militscher J."/>
            <person name="Miranda M."/>
            <person name="Nguyen M."/>
            <person name="Nierman W.C."/>
            <person name="Osborne B.I."/>
            <person name="Pai G."/>
            <person name="Peterson J."/>
            <person name="Pham P.K."/>
            <person name="Rizzo M."/>
            <person name="Rooney T."/>
            <person name="Rowley D."/>
            <person name="Sakano H."/>
            <person name="Salzberg S.L."/>
            <person name="Schwartz J.R."/>
            <person name="Shinn P."/>
            <person name="Southwick A.M."/>
            <person name="Sun H."/>
            <person name="Tallon L.J."/>
            <person name="Tambunga G."/>
            <person name="Toriumi M.J."/>
            <person name="Town C.D."/>
            <person name="Utterback T."/>
            <person name="Van Aken S."/>
            <person name="Vaysberg M."/>
            <person name="Vysotskaia V.S."/>
            <person name="Walker M."/>
            <person name="Wu D."/>
            <person name="Yu G."/>
            <person name="Fraser C.M."/>
            <person name="Venter J.C."/>
            <person name="Davis R.W."/>
        </authorList>
    </citation>
    <scope>NUCLEOTIDE SEQUENCE [LARGE SCALE GENOMIC DNA]</scope>
    <source>
        <strain>cv. Columbia</strain>
    </source>
</reference>
<reference key="3">
    <citation type="journal article" date="2017" name="Plant J.">
        <title>Araport11: a complete reannotation of the Arabidopsis thaliana reference genome.</title>
        <authorList>
            <person name="Cheng C.Y."/>
            <person name="Krishnakumar V."/>
            <person name="Chan A.P."/>
            <person name="Thibaud-Nissen F."/>
            <person name="Schobel S."/>
            <person name="Town C.D."/>
        </authorList>
    </citation>
    <scope>GENOME REANNOTATION</scope>
    <source>
        <strain>cv. Columbia</strain>
    </source>
</reference>
<reference key="4">
    <citation type="submission" date="2006-07" db="EMBL/GenBank/DDBJ databases">
        <title>Large-scale analysis of RIKEN Arabidopsis full-length (RAFL) cDNAs.</title>
        <authorList>
            <person name="Totoki Y."/>
            <person name="Seki M."/>
            <person name="Ishida J."/>
            <person name="Nakajima M."/>
            <person name="Enju A."/>
            <person name="Kamiya A."/>
            <person name="Narusaka M."/>
            <person name="Shin-i T."/>
            <person name="Nakagawa M."/>
            <person name="Sakamoto N."/>
            <person name="Oishi K."/>
            <person name="Kohara Y."/>
            <person name="Kobayashi M."/>
            <person name="Toyoda A."/>
            <person name="Sakaki Y."/>
            <person name="Sakurai T."/>
            <person name="Iida K."/>
            <person name="Akiyama K."/>
            <person name="Satou M."/>
            <person name="Toyoda T."/>
            <person name="Konagaya A."/>
            <person name="Carninci P."/>
            <person name="Kawai J."/>
            <person name="Hayashizaki Y."/>
            <person name="Shinozaki K."/>
        </authorList>
    </citation>
    <scope>NUCLEOTIDE SEQUENCE [LARGE SCALE MRNA] OF 1202-1950</scope>
    <source>
        <strain>cv. Columbia</strain>
    </source>
</reference>
<reference key="5">
    <citation type="journal article" date="2001" name="Plant Cell">
        <title>A novel UDP-glucose transferase is part of the callose synthase complex and interacts with phragmoplastin at the forming cell plate.</title>
        <authorList>
            <person name="Hong Z."/>
            <person name="Zhang Z."/>
            <person name="Olson J.M."/>
            <person name="Verma D.P.S."/>
        </authorList>
    </citation>
    <scope>SUBUNIT</scope>
    <scope>INTERACTION WITH UGT1</scope>
</reference>
<reference key="6">
    <citation type="journal article" date="2001" name="Plant Mol. Biol.">
        <title>Plant callose synthase complexes.</title>
        <authorList>
            <person name="Verma D.P.S."/>
            <person name="Hong Z."/>
        </authorList>
    </citation>
    <scope>SUBCELLULAR LOCATION</scope>
</reference>
<reference key="7">
    <citation type="journal article" date="2003" name="Plant Cell">
        <title>An Arabidopsis callose synthase, GSL5, is required for wound and papillary callose formation.</title>
        <authorList>
            <person name="Jacobs A.K."/>
            <person name="Lipka V."/>
            <person name="Burton R.A."/>
            <person name="Panstruga R."/>
            <person name="Strizhov N."/>
            <person name="Schulze-Lefert P."/>
            <person name="Fincher G.B."/>
        </authorList>
    </citation>
    <scope>FUNCTION</scope>
</reference>
<reference key="8">
    <citation type="journal article" date="2005" name="Plant Mol. Biol.">
        <title>Two callose synthases, GSL1 and GSL5, play an essential and redundant role in plant and pollen development and in fertility.</title>
        <authorList>
            <person name="Enns L.C."/>
            <person name="Kanaoka M.M."/>
            <person name="Torii K.U."/>
            <person name="Comai L."/>
            <person name="Okada K."/>
            <person name="Cleland R.E."/>
        </authorList>
    </citation>
    <scope>NOMENCLATURE</scope>
</reference>
<proteinExistence type="evidence at protein level"/>
<accession>Q9AUE0</accession>
<accession>Q0WPU7</accession>
<accession>Q9LR43</accession>
<accession>Q9SYJ7</accession>
<protein>
    <recommendedName>
        <fullName>Callose synthase 1</fullName>
        <ecNumber>2.4.1.34</ecNumber>
    </recommendedName>
    <alternativeName>
        <fullName>1,3-beta-glucan synthase</fullName>
    </alternativeName>
    <alternativeName>
        <fullName>Protein GLUCAN SYNTHASE-LIKE 6</fullName>
    </alternativeName>
</protein>
<evidence type="ECO:0000255" key="1"/>
<evidence type="ECO:0000269" key="2">
    <source>
    </source>
</evidence>
<evidence type="ECO:0000269" key="3">
    <source>
    </source>
</evidence>
<evidence type="ECO:0000269" key="4">
    <source>
    </source>
</evidence>
<evidence type="ECO:0000269" key="5">
    <source>
    </source>
</evidence>
<evidence type="ECO:0000305" key="6"/>
<sequence>MAQRREPDPPPPQRRILRTQTVGSLGEAMLDSEVVPSSLVEIAPILRVANEVEASNPRVAYLCRFYAFEKAHRLDPTSSGRGVRQFKTALLQRLERENETTLAGRQKSDAREMQSFYQHYYKKYIQALLNAADKADRAQLTKAYQTAAVLFEVLKAVNQTEDVEVADEILETHNKVEEKTQIYVPYNILPLDPDSQNQAIMRLPEIQAAVAALRNTRGLPWTAGHKKKLDEDILDWLQSMFGFQKDNVLNQREHLILLLANVHIRQFPKPDQQPKLDDRALTIVMKKLFRNYKKWCKYLGRKSSLWLPTIQQEVQQRKLLYMGLYLLIWGEAANLRFMPECLCYIYHHMAFELYGMLAGSVSPMTGEHVKPAYGGEDEAFLQKVVTPIYQTISKEAKRSRGGKSKHSVWRNYDDLNEYFWSIRCFRLGWPMRADADFFCQTAEELRLERSEIKSNSGDRWMGKVNFVEIRSFWHIFRSFDRLWSFYILCLQAMIVIAWNGSGELSAIFQGDVFLKVLSVFITAAILKLAQAVLDIALSWKARHSMSLYVKLRYVMKVGAAAVWVVVMAVTYAYSWKNASGFSQTIKNWFGGHSHNSPSLFIVAILIYLSPNMLSALLFLFPFIRRYLERSDYKIMMLMMWWSQPRLYIGRGMHESALSLFKYTMFWIVLLISKLAFSYYAEIKPLVGPTKDIMRIHISVYSWHEFFPHAKNNLGVVIALWSPVILVYFMDTQIWYAIVSTLVGGLNGAFRRLGEIRTLGMLRSRFQSIPGAFNDCLVPQDNSDDTKKKRFRATFSRKFDQLPSSKDKEAARFAQMWNKIISSFREEDLISDREMELLLVPYWSDPDLDLIRWPPFLLASKIPIALDMAKDSNGKDRELKKRLAVDSYMTCAVRECYASFKNLINYLVVGEREGQVINDIFSKIDEHIEKETLITELNLSALPDLYGQFVRLIEYLLENREEDKDQIVIVLLNMLELVTRDIMEEEVPSLLETAHNGSYVKYDVMTPLHQQRKYFSQLRFPVYSQTEAWKEKIKRLHLLLTVKESAMDVPSNLEARRRLTFFSNSLFMDMPPAPKIRNMLSFSVLTPYFSEDVLFSIFGLEQQNEDGVSILFYLQKIFPDEWTNFLERVKCGNEEELRAREDLEEELRLWASYRGQTLTKTVRGMMYYRKALELQAFLDMAKDEELLKGYKALELTSEEASKSGGSLWAQCQALADMKFTFVVSCQQYSIHKRSGDQRAKDILRLMTTYPSIRVAYIDEVEQTHKESYKGTEEKIYYSALVKAAPQTKPMDSSESVQTLDQLIYRIKLPGPAILGEGKPENQNHAIIFTRGEGLQTIDMNQDNYMEEAFKMRNLLQEFLEKHGGVRCPTILGLREHIFTGSVSSLAWFMSNQENSFVTIGQRVLASPLKVRFHYGHPDIFDRLFHLTRGGICKASKVINLSEDIFAGFNSTLREGNVTHHEYIQVGKGRDVGLNQISMFEAKIANGNGEQTLSRDLYRLGHRFDFFRMLSCYFTTIGFYFSTMLTVLTVYVFLYGRLYLVLSGLEEGLSSQRAFRNNKPLEAALASQSFVQIGFLMALPMMMEIGLERGFHNALIEFVLMQLQLASVFFTFQLGTKTHYYGRTLFHGGAEYRGTGRGFVVFHAKFAENYRFYSRSHFVKGIELMILLLVYQIFGQSYRGVVTYILITVSIWFMVVTWLFAPFLFNPSGFEWQKIVDDWTDWNKWIYNRGGIGVPPEKSWESWWEKELEHLRHSGVRGITLEIFLALRFFIFQYGLVYHLSTFKGKNQSFWVYGASWFVILFILLIVKGLGVGRRRFSTNFQLLFRIIKGLVFLTFVAILITFLALPLITIKDLFICMLAFMPTGWGMLLIAQACKPLIQQLGIWSSVRTLARGYEIVMGLLLFTPVAFLAWFPFVSEFQTRMLFNQAFSRGLQISRILGGQRKDRSSKNKE</sequence>